<protein>
    <recommendedName>
        <fullName>Cytotoxin 8</fullName>
    </recommendedName>
    <alternativeName>
        <fullName>Cardiotoxin-8</fullName>
        <shortName>CTX8</shortName>
    </alternativeName>
</protein>
<comment type="function">
    <text evidence="2 3">Shows cytolytic activity on many different cells by forming pore in lipid membranes. In vivo, increases heart rate or kills the animal by cardiac arrest. In addition, it binds to heparin with high affinity, interacts with Kv channel-interacting protein 1 (KCNIP1) in a calcium-independent manner, and binds to integrin alpha-V/beta-3 (ITGAV/ITGB3) with moderate affinity.</text>
</comment>
<comment type="subunit">
    <text evidence="2">Monomer in solution; Homodimer and oligomer in the presence of negatively charged lipids forming a pore with a size ranging between 20 and 30 Angstroms.</text>
</comment>
<comment type="subcellular location">
    <subcellularLocation>
        <location evidence="1">Secreted</location>
    </subcellularLocation>
    <subcellularLocation>
        <location evidence="2">Target cell membrane</location>
    </subcellularLocation>
</comment>
<comment type="tissue specificity">
    <text evidence="5">Expressed by the venom gland.</text>
</comment>
<comment type="miscellaneous">
    <text evidence="5">Is classified as a P-type cytotoxin, since a proline residue stands at position 51 (Pro-31 in standard classification).</text>
</comment>
<comment type="similarity">
    <text evidence="5">Belongs to the three-finger toxin family. Short-chain subfamily. Type IA cytotoxin sub-subfamily.</text>
</comment>
<proteinExistence type="inferred from homology"/>
<feature type="signal peptide" evidence="4">
    <location>
        <begin position="1"/>
        <end position="21"/>
    </location>
</feature>
<feature type="chain" id="PRO_0000035385" description="Cytotoxin 8">
    <location>
        <begin position="22"/>
        <end position="81"/>
    </location>
</feature>
<feature type="disulfide bond" evidence="2">
    <location>
        <begin position="24"/>
        <end position="42"/>
    </location>
</feature>
<feature type="disulfide bond" evidence="2">
    <location>
        <begin position="35"/>
        <end position="59"/>
    </location>
</feature>
<feature type="disulfide bond" evidence="2">
    <location>
        <begin position="63"/>
        <end position="74"/>
    </location>
</feature>
<feature type="disulfide bond" evidence="2">
    <location>
        <begin position="75"/>
        <end position="80"/>
    </location>
</feature>
<name>3SA8A_NAJAT</name>
<dbReference type="EMBL" id="Z54229">
    <property type="protein sequence ID" value="CAA90965.1"/>
    <property type="molecule type" value="mRNA"/>
</dbReference>
<dbReference type="SMR" id="P49123"/>
<dbReference type="GO" id="GO:0005576">
    <property type="term" value="C:extracellular region"/>
    <property type="evidence" value="ECO:0007669"/>
    <property type="project" value="UniProtKB-SubCell"/>
</dbReference>
<dbReference type="GO" id="GO:0016020">
    <property type="term" value="C:membrane"/>
    <property type="evidence" value="ECO:0007669"/>
    <property type="project" value="UniProtKB-KW"/>
</dbReference>
<dbReference type="GO" id="GO:0044218">
    <property type="term" value="C:other organism cell membrane"/>
    <property type="evidence" value="ECO:0007669"/>
    <property type="project" value="UniProtKB-KW"/>
</dbReference>
<dbReference type="GO" id="GO:0090729">
    <property type="term" value="F:toxin activity"/>
    <property type="evidence" value="ECO:0007669"/>
    <property type="project" value="UniProtKB-KW"/>
</dbReference>
<dbReference type="GO" id="GO:0031640">
    <property type="term" value="P:killing of cells of another organism"/>
    <property type="evidence" value="ECO:0007669"/>
    <property type="project" value="UniProtKB-KW"/>
</dbReference>
<dbReference type="CDD" id="cd00206">
    <property type="entry name" value="TFP_snake_toxin"/>
    <property type="match status" value="1"/>
</dbReference>
<dbReference type="FunFam" id="2.10.60.10:FF:000024">
    <property type="entry name" value="Cytotoxin 1"/>
    <property type="match status" value="1"/>
</dbReference>
<dbReference type="Gene3D" id="2.10.60.10">
    <property type="entry name" value="CD59"/>
    <property type="match status" value="1"/>
</dbReference>
<dbReference type="InterPro" id="IPR003572">
    <property type="entry name" value="Cytotoxin_Cobra"/>
</dbReference>
<dbReference type="InterPro" id="IPR003571">
    <property type="entry name" value="Snake_3FTx"/>
</dbReference>
<dbReference type="InterPro" id="IPR045860">
    <property type="entry name" value="Snake_toxin-like_sf"/>
</dbReference>
<dbReference type="InterPro" id="IPR018354">
    <property type="entry name" value="Snake_toxin_con_site"/>
</dbReference>
<dbReference type="InterPro" id="IPR054131">
    <property type="entry name" value="Toxin_cobra-type"/>
</dbReference>
<dbReference type="Pfam" id="PF21947">
    <property type="entry name" value="Toxin_cobra-type"/>
    <property type="match status" value="1"/>
</dbReference>
<dbReference type="PRINTS" id="PR00282">
    <property type="entry name" value="CYTOTOXIN"/>
</dbReference>
<dbReference type="SUPFAM" id="SSF57302">
    <property type="entry name" value="Snake toxin-like"/>
    <property type="match status" value="1"/>
</dbReference>
<dbReference type="PROSITE" id="PS00272">
    <property type="entry name" value="SNAKE_TOXIN"/>
    <property type="match status" value="1"/>
</dbReference>
<accession>P49123</accession>
<keyword id="KW-0123">Cardiotoxin</keyword>
<keyword id="KW-0204">Cytolysis</keyword>
<keyword id="KW-1015">Disulfide bond</keyword>
<keyword id="KW-0472">Membrane</keyword>
<keyword id="KW-0964">Secreted</keyword>
<keyword id="KW-0732">Signal</keyword>
<keyword id="KW-1052">Target cell membrane</keyword>
<keyword id="KW-1053">Target membrane</keyword>
<keyword id="KW-0800">Toxin</keyword>
<organism>
    <name type="scientific">Naja atra</name>
    <name type="common">Chinese cobra</name>
    <dbReference type="NCBI Taxonomy" id="8656"/>
    <lineage>
        <taxon>Eukaryota</taxon>
        <taxon>Metazoa</taxon>
        <taxon>Chordata</taxon>
        <taxon>Craniata</taxon>
        <taxon>Vertebrata</taxon>
        <taxon>Euteleostomi</taxon>
        <taxon>Lepidosauria</taxon>
        <taxon>Squamata</taxon>
        <taxon>Bifurcata</taxon>
        <taxon>Unidentata</taxon>
        <taxon>Episquamata</taxon>
        <taxon>Toxicofera</taxon>
        <taxon>Serpentes</taxon>
        <taxon>Colubroidea</taxon>
        <taxon>Elapidae</taxon>
        <taxon>Elapinae</taxon>
        <taxon>Naja</taxon>
    </lineage>
</organism>
<evidence type="ECO:0000250" key="1"/>
<evidence type="ECO:0000250" key="2">
    <source>
        <dbReference type="UniProtKB" id="P60301"/>
    </source>
</evidence>
<evidence type="ECO:0000250" key="3">
    <source>
        <dbReference type="UniProtKB" id="P60304"/>
    </source>
</evidence>
<evidence type="ECO:0000255" key="4"/>
<evidence type="ECO:0000305" key="5"/>
<sequence>MKTLLLTLVVVTIVCLDLGYTLKCNQLIPPFYKACAAGKNLCYKMFMVAAPKVPVKRGCIDVCPKSSLLVKYVCCNTDRCS</sequence>
<reference key="1">
    <citation type="submission" date="1995-09" db="EMBL/GenBank/DDBJ databases">
        <title>cDNA deduced amino acid sequence of a new cardiotoxin 8 from Naja naja atra.</title>
        <authorList>
            <person name="Chang L.-S."/>
            <person name="Lin J."/>
            <person name="Wu P.-F."/>
        </authorList>
    </citation>
    <scope>NUCLEOTIDE SEQUENCE [MRNA]</scope>
    <source>
        <tissue>Venom gland</tissue>
    </source>
</reference>